<keyword id="KW-0378">Hydrolase</keyword>
<keyword id="KW-0479">Metal-binding</keyword>
<keyword id="KW-0482">Metalloprotease</keyword>
<keyword id="KW-0645">Protease</keyword>
<keyword id="KW-0862">Zinc</keyword>
<accession>B6EPP3</accession>
<gene>
    <name type="ordered locus">VSAL_I0192</name>
</gene>
<proteinExistence type="inferred from homology"/>
<organism>
    <name type="scientific">Aliivibrio salmonicida (strain LFI1238)</name>
    <name type="common">Vibrio salmonicida (strain LFI1238)</name>
    <dbReference type="NCBI Taxonomy" id="316275"/>
    <lineage>
        <taxon>Bacteria</taxon>
        <taxon>Pseudomonadati</taxon>
        <taxon>Pseudomonadota</taxon>
        <taxon>Gammaproteobacteria</taxon>
        <taxon>Vibrionales</taxon>
        <taxon>Vibrionaceae</taxon>
        <taxon>Aliivibrio</taxon>
    </lineage>
</organism>
<dbReference type="EMBL" id="FM178379">
    <property type="protein sequence ID" value="CAQ77877.1"/>
    <property type="molecule type" value="Genomic_DNA"/>
</dbReference>
<dbReference type="RefSeq" id="WP_012549070.1">
    <property type="nucleotide sequence ID" value="NC_011312.1"/>
</dbReference>
<dbReference type="SMR" id="B6EPP3"/>
<dbReference type="KEGG" id="vsa:VSAL_I0192"/>
<dbReference type="eggNOG" id="COG2003">
    <property type="taxonomic scope" value="Bacteria"/>
</dbReference>
<dbReference type="HOGENOM" id="CLU_073529_0_1_6"/>
<dbReference type="Proteomes" id="UP000001730">
    <property type="component" value="Chromosome 1"/>
</dbReference>
<dbReference type="GO" id="GO:0046872">
    <property type="term" value="F:metal ion binding"/>
    <property type="evidence" value="ECO:0007669"/>
    <property type="project" value="UniProtKB-KW"/>
</dbReference>
<dbReference type="GO" id="GO:0008237">
    <property type="term" value="F:metallopeptidase activity"/>
    <property type="evidence" value="ECO:0007669"/>
    <property type="project" value="UniProtKB-KW"/>
</dbReference>
<dbReference type="GO" id="GO:0006508">
    <property type="term" value="P:proteolysis"/>
    <property type="evidence" value="ECO:0007669"/>
    <property type="project" value="UniProtKB-KW"/>
</dbReference>
<dbReference type="CDD" id="cd08071">
    <property type="entry name" value="MPN_DUF2466"/>
    <property type="match status" value="1"/>
</dbReference>
<dbReference type="FunFam" id="3.40.140.10:FF:000032">
    <property type="entry name" value="DNA repair protein RadC"/>
    <property type="match status" value="1"/>
</dbReference>
<dbReference type="Gene3D" id="1.10.150.20">
    <property type="entry name" value="5' to 3' exonuclease, C-terminal subdomain"/>
    <property type="match status" value="1"/>
</dbReference>
<dbReference type="Gene3D" id="3.40.140.10">
    <property type="entry name" value="Cytidine Deaminase, domain 2"/>
    <property type="match status" value="1"/>
</dbReference>
<dbReference type="InterPro" id="IPR037518">
    <property type="entry name" value="MPN"/>
</dbReference>
<dbReference type="InterPro" id="IPR025657">
    <property type="entry name" value="RadC_JAB"/>
</dbReference>
<dbReference type="InterPro" id="IPR010994">
    <property type="entry name" value="RuvA_2-like"/>
</dbReference>
<dbReference type="InterPro" id="IPR001405">
    <property type="entry name" value="UPF0758"/>
</dbReference>
<dbReference type="InterPro" id="IPR020891">
    <property type="entry name" value="UPF0758_CS"/>
</dbReference>
<dbReference type="InterPro" id="IPR046778">
    <property type="entry name" value="UPF0758_N"/>
</dbReference>
<dbReference type="NCBIfam" id="NF000642">
    <property type="entry name" value="PRK00024.1"/>
    <property type="match status" value="1"/>
</dbReference>
<dbReference type="NCBIfam" id="TIGR00608">
    <property type="entry name" value="radc"/>
    <property type="match status" value="1"/>
</dbReference>
<dbReference type="PANTHER" id="PTHR30471">
    <property type="entry name" value="DNA REPAIR PROTEIN RADC"/>
    <property type="match status" value="1"/>
</dbReference>
<dbReference type="PANTHER" id="PTHR30471:SF3">
    <property type="entry name" value="UPF0758 PROTEIN YEES-RELATED"/>
    <property type="match status" value="1"/>
</dbReference>
<dbReference type="Pfam" id="PF04002">
    <property type="entry name" value="RadC"/>
    <property type="match status" value="1"/>
</dbReference>
<dbReference type="Pfam" id="PF20582">
    <property type="entry name" value="UPF0758_N"/>
    <property type="match status" value="1"/>
</dbReference>
<dbReference type="SUPFAM" id="SSF102712">
    <property type="entry name" value="JAB1/MPN domain"/>
    <property type="match status" value="1"/>
</dbReference>
<dbReference type="SUPFAM" id="SSF47781">
    <property type="entry name" value="RuvA domain 2-like"/>
    <property type="match status" value="1"/>
</dbReference>
<dbReference type="PROSITE" id="PS50249">
    <property type="entry name" value="MPN"/>
    <property type="match status" value="1"/>
</dbReference>
<dbReference type="PROSITE" id="PS01302">
    <property type="entry name" value="UPF0758"/>
    <property type="match status" value="1"/>
</dbReference>
<reference key="1">
    <citation type="journal article" date="2008" name="BMC Genomics">
        <title>The genome sequence of the fish pathogen Aliivibrio salmonicida strain LFI1238 shows extensive evidence of gene decay.</title>
        <authorList>
            <person name="Hjerde E."/>
            <person name="Lorentzen M.S."/>
            <person name="Holden M.T."/>
            <person name="Seeger K."/>
            <person name="Paulsen S."/>
            <person name="Bason N."/>
            <person name="Churcher C."/>
            <person name="Harris D."/>
            <person name="Norbertczak H."/>
            <person name="Quail M.A."/>
            <person name="Sanders S."/>
            <person name="Thurston S."/>
            <person name="Parkhill J."/>
            <person name="Willassen N.P."/>
            <person name="Thomson N.R."/>
        </authorList>
    </citation>
    <scope>NUCLEOTIDE SEQUENCE [LARGE SCALE GENOMIC DNA]</scope>
    <source>
        <strain>LFI1238</strain>
    </source>
</reference>
<feature type="chain" id="PRO_1000089787" description="UPF0758 protein VSAL_I0192">
    <location>
        <begin position="1"/>
        <end position="224"/>
    </location>
</feature>
<feature type="domain" description="MPN" evidence="1">
    <location>
        <begin position="102"/>
        <end position="224"/>
    </location>
</feature>
<feature type="short sequence motif" description="JAMM motif" evidence="1">
    <location>
        <begin position="173"/>
        <end position="186"/>
    </location>
</feature>
<feature type="binding site" evidence="1">
    <location>
        <position position="173"/>
    </location>
    <ligand>
        <name>Zn(2+)</name>
        <dbReference type="ChEBI" id="CHEBI:29105"/>
        <note>catalytic</note>
    </ligand>
</feature>
<feature type="binding site" evidence="1">
    <location>
        <position position="175"/>
    </location>
    <ligand>
        <name>Zn(2+)</name>
        <dbReference type="ChEBI" id="CHEBI:29105"/>
        <note>catalytic</note>
    </ligand>
</feature>
<feature type="binding site" evidence="1">
    <location>
        <position position="186"/>
    </location>
    <ligand>
        <name>Zn(2+)</name>
        <dbReference type="ChEBI" id="CHEBI:29105"/>
        <note>catalytic</note>
    </ligand>
</feature>
<name>Y192_ALISL</name>
<protein>
    <recommendedName>
        <fullName>UPF0758 protein VSAL_I0192</fullName>
    </recommendedName>
</protein>
<sequence length="224" mass="25341">MSLMNLPEESRPREKLLALGPKSLTDAELLAIFLRTGIKGMNAIELADKLLKEFGSLRKLLGSNENEFCSHKGLGTAKFAQLQAVVEMTERYLFEKIEKEDALTSPEHTKRYLTRILRDRHREAFYVLFLDNQHRVLKGEVLFEGTIDAAAVYPREVVKRSIDYNAAAIILAHNHPSGVAEPSQADRRITKRISDAVELVDIRVLDHFVIGDGEIVSFAERGWI</sequence>
<evidence type="ECO:0000255" key="1">
    <source>
        <dbReference type="PROSITE-ProRule" id="PRU01182"/>
    </source>
</evidence>
<evidence type="ECO:0000305" key="2"/>
<comment type="similarity">
    <text evidence="2">Belongs to the UPF0758 family.</text>
</comment>